<feature type="chain" id="PRO_0000414587" description="Putative non-heme bromoperoxidase BpoC">
    <location>
        <begin position="1"/>
        <end position="262"/>
    </location>
</feature>
<feature type="active site" evidence="4">
    <location>
        <position position="87"/>
    </location>
</feature>
<feature type="active site" evidence="4">
    <location>
        <position position="211"/>
    </location>
</feature>
<feature type="active site" evidence="4">
    <location>
        <position position="239"/>
    </location>
</feature>
<feature type="binding site" evidence="4 5">
    <location>
        <position position="21"/>
    </location>
    <ligand>
        <name>substrate</name>
    </ligand>
</feature>
<feature type="binding site" evidence="4 5">
    <location>
        <begin position="87"/>
        <end position="88"/>
    </location>
    <ligand>
        <name>substrate</name>
    </ligand>
</feature>
<feature type="binding site" evidence="4 5">
    <location>
        <position position="120"/>
    </location>
    <ligand>
        <name>substrate</name>
    </ligand>
</feature>
<feature type="binding site" evidence="4 5">
    <location>
        <position position="239"/>
    </location>
    <ligand>
        <name>substrate</name>
    </ligand>
</feature>
<feature type="strand" evidence="11">
    <location>
        <begin position="6"/>
        <end position="18"/>
    </location>
</feature>
<feature type="helix" evidence="11">
    <location>
        <begin position="25"/>
        <end position="28"/>
    </location>
</feature>
<feature type="turn" evidence="11">
    <location>
        <begin position="29"/>
        <end position="32"/>
    </location>
</feature>
<feature type="helix" evidence="11">
    <location>
        <begin position="33"/>
        <end position="38"/>
    </location>
</feature>
<feature type="strand" evidence="11">
    <location>
        <begin position="42"/>
        <end position="46"/>
    </location>
</feature>
<feature type="helix" evidence="11">
    <location>
        <begin position="52"/>
        <end position="54"/>
    </location>
</feature>
<feature type="helix" evidence="11">
    <location>
        <begin position="62"/>
        <end position="75"/>
    </location>
</feature>
<feature type="strand" evidence="11">
    <location>
        <begin position="80"/>
        <end position="86"/>
    </location>
</feature>
<feature type="helix" evidence="11">
    <location>
        <begin position="88"/>
        <end position="99"/>
    </location>
</feature>
<feature type="helix" evidence="11">
    <location>
        <begin position="101"/>
        <end position="103"/>
    </location>
</feature>
<feature type="strand" evidence="11">
    <location>
        <begin position="104"/>
        <end position="111"/>
    </location>
</feature>
<feature type="helix" evidence="11">
    <location>
        <begin position="118"/>
        <end position="133"/>
    </location>
</feature>
<feature type="helix" evidence="11">
    <location>
        <begin position="139"/>
        <end position="150"/>
    </location>
</feature>
<feature type="helix" evidence="11">
    <location>
        <begin position="153"/>
        <end position="156"/>
    </location>
</feature>
<feature type="helix" evidence="11">
    <location>
        <begin position="159"/>
        <end position="171"/>
    </location>
</feature>
<feature type="helix" evidence="11">
    <location>
        <begin position="178"/>
        <end position="184"/>
    </location>
</feature>
<feature type="helix" evidence="11">
    <location>
        <begin position="193"/>
        <end position="196"/>
    </location>
</feature>
<feature type="strand" evidence="11">
    <location>
        <begin position="203"/>
        <end position="208"/>
    </location>
</feature>
<feature type="strand" evidence="11">
    <location>
        <begin position="212"/>
        <end position="214"/>
    </location>
</feature>
<feature type="helix" evidence="11">
    <location>
        <begin position="216"/>
        <end position="225"/>
    </location>
</feature>
<feature type="strand" evidence="11">
    <location>
        <begin position="229"/>
        <end position="234"/>
    </location>
</feature>
<feature type="helix" evidence="11">
    <location>
        <begin position="241"/>
        <end position="244"/>
    </location>
</feature>
<feature type="helix" evidence="11">
    <location>
        <begin position="246"/>
        <end position="259"/>
    </location>
</feature>
<name>BPOC_MYCTU</name>
<accession>P9WNH1</accession>
<accession>L0T713</accession>
<accession>O06420</accession>
<accession>Q7D9N2</accession>
<comment type="subunit">
    <text evidence="1 2">Homodimer.</text>
</comment>
<comment type="similarity">
    <text evidence="3">Belongs to the AB hydrolase superfamily.</text>
</comment>
<reference key="1">
    <citation type="journal article" date="1998" name="Nature">
        <title>Deciphering the biology of Mycobacterium tuberculosis from the complete genome sequence.</title>
        <authorList>
            <person name="Cole S.T."/>
            <person name="Brosch R."/>
            <person name="Parkhill J."/>
            <person name="Garnier T."/>
            <person name="Churcher C.M."/>
            <person name="Harris D.E."/>
            <person name="Gordon S.V."/>
            <person name="Eiglmeier K."/>
            <person name="Gas S."/>
            <person name="Barry C.E. III"/>
            <person name="Tekaia F."/>
            <person name="Badcock K."/>
            <person name="Basham D."/>
            <person name="Brown D."/>
            <person name="Chillingworth T."/>
            <person name="Connor R."/>
            <person name="Davies R.M."/>
            <person name="Devlin K."/>
            <person name="Feltwell T."/>
            <person name="Gentles S."/>
            <person name="Hamlin N."/>
            <person name="Holroyd S."/>
            <person name="Hornsby T."/>
            <person name="Jagels K."/>
            <person name="Krogh A."/>
            <person name="McLean J."/>
            <person name="Moule S."/>
            <person name="Murphy L.D."/>
            <person name="Oliver S."/>
            <person name="Osborne J."/>
            <person name="Quail M.A."/>
            <person name="Rajandream M.A."/>
            <person name="Rogers J."/>
            <person name="Rutter S."/>
            <person name="Seeger K."/>
            <person name="Skelton S."/>
            <person name="Squares S."/>
            <person name="Squares R."/>
            <person name="Sulston J.E."/>
            <person name="Taylor K."/>
            <person name="Whitehead S."/>
            <person name="Barrell B.G."/>
        </authorList>
    </citation>
    <scope>NUCLEOTIDE SEQUENCE [LARGE SCALE GENOMIC DNA]</scope>
    <source>
        <strain>ATCC 25618 / H37Rv</strain>
    </source>
</reference>
<reference key="2">
    <citation type="journal article" date="2011" name="Mol. Cell. Proteomics">
        <title>Proteogenomic analysis of Mycobacterium tuberculosis by high resolution mass spectrometry.</title>
        <authorList>
            <person name="Kelkar D.S."/>
            <person name="Kumar D."/>
            <person name="Kumar P."/>
            <person name="Balakrishnan L."/>
            <person name="Muthusamy B."/>
            <person name="Yadav A.K."/>
            <person name="Shrivastava P."/>
            <person name="Marimuthu A."/>
            <person name="Anand S."/>
            <person name="Sundaram H."/>
            <person name="Kingsbury R."/>
            <person name="Harsha H.C."/>
            <person name="Nair B."/>
            <person name="Prasad T.S."/>
            <person name="Chauhan D.S."/>
            <person name="Katoch K."/>
            <person name="Katoch V.M."/>
            <person name="Kumar P."/>
            <person name="Chaerkady R."/>
            <person name="Ramachandran S."/>
            <person name="Dash D."/>
            <person name="Pandey A."/>
        </authorList>
    </citation>
    <scope>IDENTIFICATION BY MASS SPECTROMETRY [LARGE SCALE ANALYSIS]</scope>
    <source>
        <strain>ATCC 25618 / H37Rv</strain>
    </source>
</reference>
<reference evidence="9" key="3">
    <citation type="submission" date="2009-06" db="PDB data bank">
        <title>The structure of Rv0554 from Mycobacterium tuberculosis.</title>
        <authorList>
            <person name="Johnston J.M."/>
            <person name="Baker E.N."/>
        </authorList>
    </citation>
    <scope>X-RAY CRYSTALLOGRAPHY (2.60 ANGSTROMS) OF 2-262 IN COMPLEX WITH SUBSTRATE ANALOGS</scope>
    <scope>SUBUNIT</scope>
</reference>
<reference evidence="6 7 8" key="4">
    <citation type="journal article" date="2010" name="Acta Crystallogr. D">
        <title>Structural and functional analysis of Rv0554 from Mycobacterium tuberculosis: testing a putative role in menaquinone biosynthesis.</title>
        <authorList>
            <person name="Johnston J.M."/>
            <person name="Jiang M."/>
            <person name="Guo Z."/>
            <person name="Baker E.N."/>
        </authorList>
    </citation>
    <scope>X-RAY CRYSTALLOGRAPHY (1.90 ANGSTROMS) OF 2-262 IN COMPLEX WITH SUBSTRATE ANALOGS</scope>
    <scope>SUBUNIT</scope>
    <scope>ACTIVE SITE</scope>
</reference>
<reference evidence="10" key="5">
    <citation type="submission" date="2021-01" db="PDB data bank">
        <title>Crystal structure of putative non-heme bromoperoxidase BpoC from Mycobacterium tuberculosis H37Rv.</title>
        <authorList>
            <person name="DeBouver N.D."/>
            <person name="Dranow D.M."/>
            <person name="Lorimer D.D."/>
            <person name="Horanyi P.S."/>
            <person name="Edwards T.E."/>
        </authorList>
    </citation>
    <scope>X-RAY CRYSTALLOGRAPHY (1.50 ANGSTROMS) OF 2-262</scope>
</reference>
<organism>
    <name type="scientific">Mycobacterium tuberculosis (strain ATCC 25618 / H37Rv)</name>
    <dbReference type="NCBI Taxonomy" id="83332"/>
    <lineage>
        <taxon>Bacteria</taxon>
        <taxon>Bacillati</taxon>
        <taxon>Actinomycetota</taxon>
        <taxon>Actinomycetes</taxon>
        <taxon>Mycobacteriales</taxon>
        <taxon>Mycobacteriaceae</taxon>
        <taxon>Mycobacterium</taxon>
        <taxon>Mycobacterium tuberculosis complex</taxon>
    </lineage>
</organism>
<proteinExistence type="evidence at protein level"/>
<protein>
    <recommendedName>
        <fullName>Putative non-heme bromoperoxidase BpoC</fullName>
    </recommendedName>
</protein>
<gene>
    <name type="primary">bpoC</name>
    <name type="ordered locus">Rv0554</name>
</gene>
<evidence type="ECO:0000269" key="1">
    <source>
    </source>
</evidence>
<evidence type="ECO:0000269" key="2">
    <source ref="3"/>
</evidence>
<evidence type="ECO:0000305" key="3"/>
<evidence type="ECO:0000305" key="4">
    <source>
    </source>
</evidence>
<evidence type="ECO:0000305" key="5">
    <source ref="3"/>
</evidence>
<evidence type="ECO:0007744" key="6">
    <source>
        <dbReference type="PDB" id="3E3A"/>
    </source>
</evidence>
<evidence type="ECO:0007744" key="7">
    <source>
        <dbReference type="PDB" id="3HSS"/>
    </source>
</evidence>
<evidence type="ECO:0007744" key="8">
    <source>
        <dbReference type="PDB" id="3HYS"/>
    </source>
</evidence>
<evidence type="ECO:0007744" key="9">
    <source>
        <dbReference type="PDB" id="3HZO"/>
    </source>
</evidence>
<evidence type="ECO:0007744" key="10">
    <source>
        <dbReference type="PDB" id="7LD8"/>
    </source>
</evidence>
<evidence type="ECO:0007829" key="11">
    <source>
        <dbReference type="PDB" id="7LD8"/>
    </source>
</evidence>
<dbReference type="EMBL" id="AL123456">
    <property type="protein sequence ID" value="CCP43292.1"/>
    <property type="molecule type" value="Genomic_DNA"/>
</dbReference>
<dbReference type="PIR" id="E70548">
    <property type="entry name" value="E70548"/>
</dbReference>
<dbReference type="RefSeq" id="NP_215068.1">
    <property type="nucleotide sequence ID" value="NC_000962.3"/>
</dbReference>
<dbReference type="RefSeq" id="WP_003402925.1">
    <property type="nucleotide sequence ID" value="NZ_NVQJ01000036.1"/>
</dbReference>
<dbReference type="PDB" id="3E3A">
    <property type="method" value="X-ray"/>
    <property type="resolution" value="2.35 A"/>
    <property type="chains" value="A/B=2-262"/>
</dbReference>
<dbReference type="PDB" id="3HSS">
    <property type="method" value="X-ray"/>
    <property type="resolution" value="1.90 A"/>
    <property type="chains" value="A/B=2-262"/>
</dbReference>
<dbReference type="PDB" id="3HYS">
    <property type="method" value="X-ray"/>
    <property type="resolution" value="2.30 A"/>
    <property type="chains" value="A/B=2-262"/>
</dbReference>
<dbReference type="PDB" id="3HZO">
    <property type="method" value="X-ray"/>
    <property type="resolution" value="2.60 A"/>
    <property type="chains" value="A/B=2-262"/>
</dbReference>
<dbReference type="PDB" id="7LD8">
    <property type="method" value="X-ray"/>
    <property type="resolution" value="1.50 A"/>
    <property type="chains" value="A=2-262"/>
</dbReference>
<dbReference type="PDBsum" id="3E3A"/>
<dbReference type="PDBsum" id="3HSS"/>
<dbReference type="PDBsum" id="3HYS"/>
<dbReference type="PDBsum" id="3HZO"/>
<dbReference type="PDBsum" id="7LD8"/>
<dbReference type="SMR" id="P9WNH1"/>
<dbReference type="FunCoup" id="P9WNH1">
    <property type="interactions" value="56"/>
</dbReference>
<dbReference type="STRING" id="83332.Rv0554"/>
<dbReference type="ESTHER" id="myctu-bpoC">
    <property type="family name" value="6_AlphaBeta_hydrolase"/>
</dbReference>
<dbReference type="PaxDb" id="83332-Rv0554"/>
<dbReference type="DNASU" id="887535"/>
<dbReference type="GeneID" id="887535"/>
<dbReference type="KEGG" id="mtu:Rv0554"/>
<dbReference type="KEGG" id="mtv:RVBD_0554"/>
<dbReference type="TubercuList" id="Rv0554"/>
<dbReference type="eggNOG" id="COG2267">
    <property type="taxonomic scope" value="Bacteria"/>
</dbReference>
<dbReference type="InParanoid" id="P9WNH1"/>
<dbReference type="OrthoDB" id="3210844at2"/>
<dbReference type="PhylomeDB" id="P9WNH1"/>
<dbReference type="EvolutionaryTrace" id="P9WNH1"/>
<dbReference type="Proteomes" id="UP000001584">
    <property type="component" value="Chromosome"/>
</dbReference>
<dbReference type="GO" id="GO:0016020">
    <property type="term" value="C:membrane"/>
    <property type="evidence" value="ECO:0000318"/>
    <property type="project" value="GO_Central"/>
</dbReference>
<dbReference type="GO" id="GO:0019806">
    <property type="term" value="F:bromide peroxidase activity"/>
    <property type="evidence" value="ECO:0007669"/>
    <property type="project" value="UniProtKB-EC"/>
</dbReference>
<dbReference type="Gene3D" id="3.40.50.1820">
    <property type="entry name" value="alpha/beta hydrolase"/>
    <property type="match status" value="1"/>
</dbReference>
<dbReference type="InterPro" id="IPR050471">
    <property type="entry name" value="AB_hydrolase"/>
</dbReference>
<dbReference type="InterPro" id="IPR000073">
    <property type="entry name" value="AB_hydrolase_1"/>
</dbReference>
<dbReference type="InterPro" id="IPR029058">
    <property type="entry name" value="AB_hydrolase_fold"/>
</dbReference>
<dbReference type="InterPro" id="IPR000639">
    <property type="entry name" value="Epox_hydrolase-like"/>
</dbReference>
<dbReference type="PANTHER" id="PTHR43433:SF5">
    <property type="entry name" value="AB HYDROLASE-1 DOMAIN-CONTAINING PROTEIN"/>
    <property type="match status" value="1"/>
</dbReference>
<dbReference type="PANTHER" id="PTHR43433">
    <property type="entry name" value="HYDROLASE, ALPHA/BETA FOLD FAMILY PROTEIN"/>
    <property type="match status" value="1"/>
</dbReference>
<dbReference type="Pfam" id="PF00561">
    <property type="entry name" value="Abhydrolase_1"/>
    <property type="match status" value="1"/>
</dbReference>
<dbReference type="PRINTS" id="PR00111">
    <property type="entry name" value="ABHYDROLASE"/>
</dbReference>
<dbReference type="PRINTS" id="PR00412">
    <property type="entry name" value="EPOXHYDRLASE"/>
</dbReference>
<dbReference type="SUPFAM" id="SSF53474">
    <property type="entry name" value="alpha/beta-Hydrolases"/>
    <property type="match status" value="1"/>
</dbReference>
<sequence length="262" mass="28381">MINLAYDDNGTGDPVVFIAGRGGAGRTWHPHQVPAFLAAGYRCITFDNRGIGATENAEGFTTQTMVADTAALIETLDIAPARVVGVSMGAFIAQELMVVAPELVSSAVLMATRGRLDRARQFFNKAEAELYDSGVQLPPTYDARARLLENFSRKTLNDDVAVGDWIAMFSMWPIKSTPGLRCQLDCAPQTNRLPAYRNIAAPVLVIGFADDVVTPPYLGREVADALPNGRYLQIPDAGHLGFFERPEAVNTAMLKFFASVKA</sequence>
<keyword id="KW-0002">3D-structure</keyword>
<keyword id="KW-0560">Oxidoreductase</keyword>
<keyword id="KW-0575">Peroxidase</keyword>
<keyword id="KW-1185">Reference proteome</keyword>